<gene>
    <name evidence="1" type="primary">rnfD</name>
    <name type="ordered locus">BUAP5A_114</name>
</gene>
<evidence type="ECO:0000255" key="1">
    <source>
        <dbReference type="HAMAP-Rule" id="MF_00462"/>
    </source>
</evidence>
<accession>B8D8R7</accession>
<comment type="function">
    <text evidence="1">Part of a membrane-bound complex that couples electron transfer with translocation of ions across the membrane.</text>
</comment>
<comment type="cofactor">
    <cofactor evidence="1">
        <name>FMN</name>
        <dbReference type="ChEBI" id="CHEBI:58210"/>
    </cofactor>
</comment>
<comment type="subunit">
    <text evidence="1">The complex is composed of six subunits: RnfA, RnfB, RnfC, RnfD, RnfE and RnfG.</text>
</comment>
<comment type="subcellular location">
    <subcellularLocation>
        <location evidence="1">Cell inner membrane</location>
        <topology evidence="1">Multi-pass membrane protein</topology>
    </subcellularLocation>
</comment>
<comment type="similarity">
    <text evidence="1">Belongs to the NqrB/RnfD family.</text>
</comment>
<sequence length="347" mass="39559">MNFPCIYHVYSIRKIMFLVIVACLPGIFAKYYFFGIGTLIQIFFSIFISLVLEIIILKIRSKNIKNYLQDTSLVLTSVLFGVSIPPLLPWWMTSIGLFFAIVVAKHLYGGIGQNIFNPAMVGYAVLLISFPVYMNNWNERDFSLSFFNDFKKSAYIIFFKNDITTVSSSYLNIIPDAFTTATPLNNFKIKSHLKDDFFLKENIIKNKEVSIQTSWKCINISFFLGGIFLLFTKIICWRIPISFLSSLGMLSIITYFYSKELFMSPQVHFFSGGTMICAFFIATDPVTAACNNVGKIVFGIIIGFLVWIIRNYSDYPDAIAFSVLFANMTVPLVDYYTKSSGYGRNNI</sequence>
<proteinExistence type="inferred from homology"/>
<reference key="1">
    <citation type="journal article" date="2009" name="Science">
        <title>The dynamics and time scale of ongoing genomic erosion in symbiotic bacteria.</title>
        <authorList>
            <person name="Moran N.A."/>
            <person name="McLaughlin H.J."/>
            <person name="Sorek R."/>
        </authorList>
    </citation>
    <scope>NUCLEOTIDE SEQUENCE [LARGE SCALE GENOMIC DNA]</scope>
    <source>
        <strain>5A</strain>
    </source>
</reference>
<name>RNFD_BUCA5</name>
<feature type="chain" id="PRO_1000191667" description="Ion-translocating oxidoreductase complex subunit D">
    <location>
        <begin position="1"/>
        <end position="347"/>
    </location>
</feature>
<feature type="transmembrane region" description="Helical" evidence="1">
    <location>
        <begin position="15"/>
        <end position="35"/>
    </location>
</feature>
<feature type="transmembrane region" description="Helical" evidence="1">
    <location>
        <begin position="36"/>
        <end position="56"/>
    </location>
</feature>
<feature type="transmembrane region" description="Helical" evidence="1">
    <location>
        <begin position="84"/>
        <end position="104"/>
    </location>
</feature>
<feature type="transmembrane region" description="Helical" evidence="1">
    <location>
        <begin position="114"/>
        <end position="134"/>
    </location>
</feature>
<feature type="transmembrane region" description="Helical" evidence="1">
    <location>
        <begin position="217"/>
        <end position="237"/>
    </location>
</feature>
<feature type="transmembrane region" description="Helical" evidence="1">
    <location>
        <begin position="239"/>
        <end position="259"/>
    </location>
</feature>
<feature type="transmembrane region" description="Helical" evidence="1">
    <location>
        <begin position="261"/>
        <end position="281"/>
    </location>
</feature>
<feature type="transmembrane region" description="Helical" evidence="1">
    <location>
        <begin position="289"/>
        <end position="309"/>
    </location>
</feature>
<feature type="transmembrane region" description="Helical" evidence="1">
    <location>
        <begin position="315"/>
        <end position="335"/>
    </location>
</feature>
<feature type="modified residue" description="FMN phosphoryl threonine" evidence="1">
    <location>
        <position position="182"/>
    </location>
</feature>
<organism>
    <name type="scientific">Buchnera aphidicola subsp. Acyrthosiphon pisum (strain 5A)</name>
    <dbReference type="NCBI Taxonomy" id="563178"/>
    <lineage>
        <taxon>Bacteria</taxon>
        <taxon>Pseudomonadati</taxon>
        <taxon>Pseudomonadota</taxon>
        <taxon>Gammaproteobacteria</taxon>
        <taxon>Enterobacterales</taxon>
        <taxon>Erwiniaceae</taxon>
        <taxon>Buchnera</taxon>
    </lineage>
</organism>
<dbReference type="EC" id="7.-.-.-" evidence="1"/>
<dbReference type="EMBL" id="CP001161">
    <property type="protein sequence ID" value="ACL30489.1"/>
    <property type="molecule type" value="Genomic_DNA"/>
</dbReference>
<dbReference type="RefSeq" id="WP_010895954.1">
    <property type="nucleotide sequence ID" value="NC_011833.1"/>
</dbReference>
<dbReference type="SMR" id="B8D8R7"/>
<dbReference type="KEGG" id="bap:BUAP5A_114"/>
<dbReference type="HOGENOM" id="CLU_042020_0_0_6"/>
<dbReference type="OrthoDB" id="9776359at2"/>
<dbReference type="Proteomes" id="UP000006904">
    <property type="component" value="Chromosome"/>
</dbReference>
<dbReference type="GO" id="GO:0005886">
    <property type="term" value="C:plasma membrane"/>
    <property type="evidence" value="ECO:0007669"/>
    <property type="project" value="UniProtKB-SubCell"/>
</dbReference>
<dbReference type="GO" id="GO:0022900">
    <property type="term" value="P:electron transport chain"/>
    <property type="evidence" value="ECO:0007669"/>
    <property type="project" value="UniProtKB-UniRule"/>
</dbReference>
<dbReference type="GO" id="GO:0055085">
    <property type="term" value="P:transmembrane transport"/>
    <property type="evidence" value="ECO:0007669"/>
    <property type="project" value="InterPro"/>
</dbReference>
<dbReference type="HAMAP" id="MF_00462">
    <property type="entry name" value="RsxD_RnfD"/>
    <property type="match status" value="1"/>
</dbReference>
<dbReference type="InterPro" id="IPR004338">
    <property type="entry name" value="NqrB/RnfD"/>
</dbReference>
<dbReference type="InterPro" id="IPR011303">
    <property type="entry name" value="RnfD_bac"/>
</dbReference>
<dbReference type="NCBIfam" id="TIGR01946">
    <property type="entry name" value="rnfD"/>
    <property type="match status" value="1"/>
</dbReference>
<dbReference type="PANTHER" id="PTHR30578">
    <property type="entry name" value="ELECTRON TRANSPORT COMPLEX PROTEIN RNFD"/>
    <property type="match status" value="1"/>
</dbReference>
<dbReference type="PANTHER" id="PTHR30578:SF0">
    <property type="entry name" value="ION-TRANSLOCATING OXIDOREDUCTASE COMPLEX SUBUNIT D"/>
    <property type="match status" value="1"/>
</dbReference>
<dbReference type="Pfam" id="PF03116">
    <property type="entry name" value="NQR2_RnfD_RnfE"/>
    <property type="match status" value="1"/>
</dbReference>
<protein>
    <recommendedName>
        <fullName evidence="1">Ion-translocating oxidoreductase complex subunit D</fullName>
        <ecNumber evidence="1">7.-.-.-</ecNumber>
    </recommendedName>
    <alternativeName>
        <fullName evidence="1">Rnf electron transport complex subunit D</fullName>
    </alternativeName>
</protein>
<keyword id="KW-0997">Cell inner membrane</keyword>
<keyword id="KW-1003">Cell membrane</keyword>
<keyword id="KW-0249">Electron transport</keyword>
<keyword id="KW-0285">Flavoprotein</keyword>
<keyword id="KW-0288">FMN</keyword>
<keyword id="KW-0472">Membrane</keyword>
<keyword id="KW-0597">Phosphoprotein</keyword>
<keyword id="KW-1278">Translocase</keyword>
<keyword id="KW-0812">Transmembrane</keyword>
<keyword id="KW-1133">Transmembrane helix</keyword>
<keyword id="KW-0813">Transport</keyword>